<evidence type="ECO:0000255" key="1">
    <source>
        <dbReference type="HAMAP-Rule" id="MF_00156"/>
    </source>
</evidence>
<protein>
    <recommendedName>
        <fullName evidence="1">3-methyl-2-oxobutanoate hydroxymethyltransferase</fullName>
        <ecNumber evidence="1">2.1.2.11</ecNumber>
    </recommendedName>
    <alternativeName>
        <fullName evidence="1">Ketopantoate hydroxymethyltransferase</fullName>
        <shortName evidence="1">KPHMT</shortName>
    </alternativeName>
</protein>
<sequence>MSAPVTRKRLTPKVIQAMKGECPIVSLTAYTTPVARLLDPHCDLLLVGDSLGMVLYGMESTLAVTLDMMIMHGQAVMRGTSHACVIVDMPFGSYQESKEQAFRNAARVMQETGCDGVKLEGGEEMAETVAFLVRRGIPVFGHVGLMPQQVNTVGGFRSLGRGDDEAGKIRRDAQAIAQAGAFAVVIEGTVEPLAREITALIDIPTVGIGASSACDGQVLVSDDMLGLFQDFTPRFVKRFAHLAPQVSQAAEAYAEEVRARRFPGPEHVFGAKPGA</sequence>
<comment type="function">
    <text evidence="1">Catalyzes the reversible reaction in which hydroxymethyl group from 5,10-methylenetetrahydrofolate is transferred onto alpha-ketoisovalerate to form ketopantoate.</text>
</comment>
<comment type="catalytic activity">
    <reaction evidence="1">
        <text>3-methyl-2-oxobutanoate + (6R)-5,10-methylene-5,6,7,8-tetrahydrofolate + H2O = 2-dehydropantoate + (6S)-5,6,7,8-tetrahydrofolate</text>
        <dbReference type="Rhea" id="RHEA:11824"/>
        <dbReference type="ChEBI" id="CHEBI:11561"/>
        <dbReference type="ChEBI" id="CHEBI:11851"/>
        <dbReference type="ChEBI" id="CHEBI:15377"/>
        <dbReference type="ChEBI" id="CHEBI:15636"/>
        <dbReference type="ChEBI" id="CHEBI:57453"/>
        <dbReference type="EC" id="2.1.2.11"/>
    </reaction>
</comment>
<comment type="cofactor">
    <cofactor evidence="1">
        <name>Mg(2+)</name>
        <dbReference type="ChEBI" id="CHEBI:18420"/>
    </cofactor>
    <text evidence="1">Binds 1 Mg(2+) ion per subunit.</text>
</comment>
<comment type="pathway">
    <text evidence="1">Cofactor biosynthesis; (R)-pantothenate biosynthesis; (R)-pantoate from 3-methyl-2-oxobutanoate: step 1/2.</text>
</comment>
<comment type="subunit">
    <text evidence="1">Homodecamer; pentamer of dimers.</text>
</comment>
<comment type="subcellular location">
    <subcellularLocation>
        <location evidence="1">Cytoplasm</location>
    </subcellularLocation>
</comment>
<comment type="similarity">
    <text evidence="1">Belongs to the PanB family.</text>
</comment>
<keyword id="KW-0963">Cytoplasm</keyword>
<keyword id="KW-0460">Magnesium</keyword>
<keyword id="KW-0479">Metal-binding</keyword>
<keyword id="KW-0566">Pantothenate biosynthesis</keyword>
<keyword id="KW-0808">Transferase</keyword>
<gene>
    <name evidence="1" type="primary">panB</name>
    <name type="ordered locus">BR0330</name>
    <name type="ordered locus">BS1330_I0331</name>
</gene>
<dbReference type="EC" id="2.1.2.11" evidence="1"/>
<dbReference type="EMBL" id="AE014291">
    <property type="protein sequence ID" value="AAN29279.1"/>
    <property type="molecule type" value="Genomic_DNA"/>
</dbReference>
<dbReference type="EMBL" id="CP002997">
    <property type="protein sequence ID" value="AEM17692.1"/>
    <property type="molecule type" value="Genomic_DNA"/>
</dbReference>
<dbReference type="RefSeq" id="WP_002963495.1">
    <property type="nucleotide sequence ID" value="NZ_KN046804.1"/>
</dbReference>
<dbReference type="SMR" id="P65655"/>
<dbReference type="GeneID" id="97534281"/>
<dbReference type="KEGG" id="bms:BR0330"/>
<dbReference type="KEGG" id="bsi:BS1330_I0331"/>
<dbReference type="PATRIC" id="fig|204722.21.peg.2490"/>
<dbReference type="HOGENOM" id="CLU_036645_1_0_5"/>
<dbReference type="PhylomeDB" id="P65655"/>
<dbReference type="UniPathway" id="UPA00028">
    <property type="reaction ID" value="UER00003"/>
</dbReference>
<dbReference type="Proteomes" id="UP000007104">
    <property type="component" value="Chromosome I"/>
</dbReference>
<dbReference type="GO" id="GO:0005737">
    <property type="term" value="C:cytoplasm"/>
    <property type="evidence" value="ECO:0007669"/>
    <property type="project" value="UniProtKB-SubCell"/>
</dbReference>
<dbReference type="GO" id="GO:0003864">
    <property type="term" value="F:3-methyl-2-oxobutanoate hydroxymethyltransferase activity"/>
    <property type="evidence" value="ECO:0007669"/>
    <property type="project" value="UniProtKB-UniRule"/>
</dbReference>
<dbReference type="GO" id="GO:0000287">
    <property type="term" value="F:magnesium ion binding"/>
    <property type="evidence" value="ECO:0007669"/>
    <property type="project" value="TreeGrafter"/>
</dbReference>
<dbReference type="GO" id="GO:0015940">
    <property type="term" value="P:pantothenate biosynthetic process"/>
    <property type="evidence" value="ECO:0007669"/>
    <property type="project" value="UniProtKB-UniRule"/>
</dbReference>
<dbReference type="CDD" id="cd06557">
    <property type="entry name" value="KPHMT-like"/>
    <property type="match status" value="1"/>
</dbReference>
<dbReference type="FunFam" id="3.20.20.60:FF:000003">
    <property type="entry name" value="3-methyl-2-oxobutanoate hydroxymethyltransferase"/>
    <property type="match status" value="1"/>
</dbReference>
<dbReference type="Gene3D" id="3.20.20.60">
    <property type="entry name" value="Phosphoenolpyruvate-binding domains"/>
    <property type="match status" value="1"/>
</dbReference>
<dbReference type="HAMAP" id="MF_00156">
    <property type="entry name" value="PanB"/>
    <property type="match status" value="1"/>
</dbReference>
<dbReference type="InterPro" id="IPR003700">
    <property type="entry name" value="Pantoate_hydroxy_MeTrfase"/>
</dbReference>
<dbReference type="InterPro" id="IPR015813">
    <property type="entry name" value="Pyrv/PenolPyrv_kinase-like_dom"/>
</dbReference>
<dbReference type="InterPro" id="IPR040442">
    <property type="entry name" value="Pyrv_kinase-like_dom_sf"/>
</dbReference>
<dbReference type="NCBIfam" id="TIGR00222">
    <property type="entry name" value="panB"/>
    <property type="match status" value="1"/>
</dbReference>
<dbReference type="NCBIfam" id="NF001452">
    <property type="entry name" value="PRK00311.1"/>
    <property type="match status" value="1"/>
</dbReference>
<dbReference type="PANTHER" id="PTHR20881">
    <property type="entry name" value="3-METHYL-2-OXOBUTANOATE HYDROXYMETHYLTRANSFERASE"/>
    <property type="match status" value="1"/>
</dbReference>
<dbReference type="PANTHER" id="PTHR20881:SF0">
    <property type="entry name" value="3-METHYL-2-OXOBUTANOATE HYDROXYMETHYLTRANSFERASE"/>
    <property type="match status" value="1"/>
</dbReference>
<dbReference type="Pfam" id="PF02548">
    <property type="entry name" value="Pantoate_transf"/>
    <property type="match status" value="1"/>
</dbReference>
<dbReference type="PIRSF" id="PIRSF000388">
    <property type="entry name" value="Pantoate_hydroxy_MeTrfase"/>
    <property type="match status" value="1"/>
</dbReference>
<dbReference type="SUPFAM" id="SSF51621">
    <property type="entry name" value="Phosphoenolpyruvate/pyruvate domain"/>
    <property type="match status" value="1"/>
</dbReference>
<name>PANB_BRUSU</name>
<reference key="1">
    <citation type="journal article" date="2002" name="Proc. Natl. Acad. Sci. U.S.A.">
        <title>The Brucella suis genome reveals fundamental similarities between animal and plant pathogens and symbionts.</title>
        <authorList>
            <person name="Paulsen I.T."/>
            <person name="Seshadri R."/>
            <person name="Nelson K.E."/>
            <person name="Eisen J.A."/>
            <person name="Heidelberg J.F."/>
            <person name="Read T.D."/>
            <person name="Dodson R.J."/>
            <person name="Umayam L.A."/>
            <person name="Brinkac L.M."/>
            <person name="Beanan M.J."/>
            <person name="Daugherty S.C."/>
            <person name="DeBoy R.T."/>
            <person name="Durkin A.S."/>
            <person name="Kolonay J.F."/>
            <person name="Madupu R."/>
            <person name="Nelson W.C."/>
            <person name="Ayodeji B."/>
            <person name="Kraul M."/>
            <person name="Shetty J."/>
            <person name="Malek J.A."/>
            <person name="Van Aken S.E."/>
            <person name="Riedmuller S."/>
            <person name="Tettelin H."/>
            <person name="Gill S.R."/>
            <person name="White O."/>
            <person name="Salzberg S.L."/>
            <person name="Hoover D.L."/>
            <person name="Lindler L.E."/>
            <person name="Halling S.M."/>
            <person name="Boyle S.M."/>
            <person name="Fraser C.M."/>
        </authorList>
    </citation>
    <scope>NUCLEOTIDE SEQUENCE [LARGE SCALE GENOMIC DNA]</scope>
    <source>
        <strain>1330</strain>
    </source>
</reference>
<reference key="2">
    <citation type="journal article" date="2011" name="J. Bacteriol.">
        <title>Revised genome sequence of Brucella suis 1330.</title>
        <authorList>
            <person name="Tae H."/>
            <person name="Shallom S."/>
            <person name="Settlage R."/>
            <person name="Preston D."/>
            <person name="Adams L.G."/>
            <person name="Garner H.R."/>
        </authorList>
    </citation>
    <scope>NUCLEOTIDE SEQUENCE [LARGE SCALE GENOMIC DNA]</scope>
    <source>
        <strain>1330</strain>
    </source>
</reference>
<proteinExistence type="inferred from homology"/>
<accession>P65655</accession>
<accession>G0K686</accession>
<accession>Q8YFD0</accession>
<organism>
    <name type="scientific">Brucella suis biovar 1 (strain 1330)</name>
    <dbReference type="NCBI Taxonomy" id="204722"/>
    <lineage>
        <taxon>Bacteria</taxon>
        <taxon>Pseudomonadati</taxon>
        <taxon>Pseudomonadota</taxon>
        <taxon>Alphaproteobacteria</taxon>
        <taxon>Hyphomicrobiales</taxon>
        <taxon>Brucellaceae</taxon>
        <taxon>Brucella/Ochrobactrum group</taxon>
        <taxon>Brucella</taxon>
    </lineage>
</organism>
<feature type="chain" id="PRO_0000184827" description="3-methyl-2-oxobutanoate hydroxymethyltransferase">
    <location>
        <begin position="1"/>
        <end position="275"/>
    </location>
</feature>
<feature type="active site" description="Proton acceptor" evidence="1">
    <location>
        <position position="187"/>
    </location>
</feature>
<feature type="binding site" evidence="1">
    <location>
        <begin position="49"/>
        <end position="50"/>
    </location>
    <ligand>
        <name>3-methyl-2-oxobutanoate</name>
        <dbReference type="ChEBI" id="CHEBI:11851"/>
    </ligand>
</feature>
<feature type="binding site" evidence="1">
    <location>
        <position position="49"/>
    </location>
    <ligand>
        <name>Mg(2+)</name>
        <dbReference type="ChEBI" id="CHEBI:18420"/>
    </ligand>
</feature>
<feature type="binding site" evidence="1">
    <location>
        <position position="88"/>
    </location>
    <ligand>
        <name>3-methyl-2-oxobutanoate</name>
        <dbReference type="ChEBI" id="CHEBI:11851"/>
    </ligand>
</feature>
<feature type="binding site" evidence="1">
    <location>
        <position position="88"/>
    </location>
    <ligand>
        <name>Mg(2+)</name>
        <dbReference type="ChEBI" id="CHEBI:18420"/>
    </ligand>
</feature>
<feature type="binding site" evidence="1">
    <location>
        <position position="118"/>
    </location>
    <ligand>
        <name>3-methyl-2-oxobutanoate</name>
        <dbReference type="ChEBI" id="CHEBI:11851"/>
    </ligand>
</feature>
<feature type="binding site" evidence="1">
    <location>
        <position position="120"/>
    </location>
    <ligand>
        <name>Mg(2+)</name>
        <dbReference type="ChEBI" id="CHEBI:18420"/>
    </ligand>
</feature>